<accession>Q00520</accession>
<dbReference type="EC" id="2.3.1.181"/>
<dbReference type="EMBL" id="X62808">
    <property type="protein sequence ID" value="CAA44626.1"/>
    <property type="molecule type" value="Genomic_DNA"/>
</dbReference>
<dbReference type="PIR" id="S23629">
    <property type="entry name" value="S23629"/>
</dbReference>
<dbReference type="SMR" id="Q00520"/>
<dbReference type="eggNOG" id="COG0321">
    <property type="taxonomic scope" value="Bacteria"/>
</dbReference>
<dbReference type="UniPathway" id="UPA00538">
    <property type="reaction ID" value="UER00592"/>
</dbReference>
<dbReference type="GO" id="GO:0005737">
    <property type="term" value="C:cytoplasm"/>
    <property type="evidence" value="ECO:0007669"/>
    <property type="project" value="UniProtKB-SubCell"/>
</dbReference>
<dbReference type="GO" id="GO:0033819">
    <property type="term" value="F:lipoyl(octanoyl) transferase activity"/>
    <property type="evidence" value="ECO:0007669"/>
    <property type="project" value="UniProtKB-EC"/>
</dbReference>
<dbReference type="GO" id="GO:0036211">
    <property type="term" value="P:protein modification process"/>
    <property type="evidence" value="ECO:0007669"/>
    <property type="project" value="InterPro"/>
</dbReference>
<dbReference type="CDD" id="cd16444">
    <property type="entry name" value="LipB"/>
    <property type="match status" value="1"/>
</dbReference>
<dbReference type="Gene3D" id="3.30.930.10">
    <property type="entry name" value="Bira Bifunctional Protein, Domain 2"/>
    <property type="match status" value="1"/>
</dbReference>
<dbReference type="InterPro" id="IPR045864">
    <property type="entry name" value="aa-tRNA-synth_II/BPL/LPL"/>
</dbReference>
<dbReference type="InterPro" id="IPR004143">
    <property type="entry name" value="BPL_LPL_catalytic"/>
</dbReference>
<dbReference type="InterPro" id="IPR000544">
    <property type="entry name" value="Octanoyltransferase"/>
</dbReference>
<dbReference type="InterPro" id="IPR020605">
    <property type="entry name" value="Octanoyltransferase_CS"/>
</dbReference>
<dbReference type="NCBIfam" id="TIGR00214">
    <property type="entry name" value="lipB"/>
    <property type="match status" value="1"/>
</dbReference>
<dbReference type="NCBIfam" id="NF010921">
    <property type="entry name" value="PRK14341.1"/>
    <property type="match status" value="1"/>
</dbReference>
<dbReference type="PANTHER" id="PTHR10993:SF7">
    <property type="entry name" value="LIPOYLTRANSFERASE 2, MITOCHONDRIAL-RELATED"/>
    <property type="match status" value="1"/>
</dbReference>
<dbReference type="PANTHER" id="PTHR10993">
    <property type="entry name" value="OCTANOYLTRANSFERASE"/>
    <property type="match status" value="1"/>
</dbReference>
<dbReference type="Pfam" id="PF21948">
    <property type="entry name" value="LplA-B_cat"/>
    <property type="match status" value="1"/>
</dbReference>
<dbReference type="PIRSF" id="PIRSF016262">
    <property type="entry name" value="LPLase"/>
    <property type="match status" value="1"/>
</dbReference>
<dbReference type="SUPFAM" id="SSF55681">
    <property type="entry name" value="Class II aaRS and biotin synthetases"/>
    <property type="match status" value="1"/>
</dbReference>
<dbReference type="PROSITE" id="PS51733">
    <property type="entry name" value="BPL_LPL_CATALYTIC"/>
    <property type="match status" value="1"/>
</dbReference>
<dbReference type="PROSITE" id="PS01313">
    <property type="entry name" value="LIPB"/>
    <property type="match status" value="1"/>
</dbReference>
<feature type="chain" id="PRO_0000062857" description="Octanoyltransferase">
    <location>
        <begin position="1" status="less than"/>
        <end position="155"/>
    </location>
</feature>
<feature type="domain" description="BPL/LPL catalytic" evidence="2">
    <location>
        <begin position="1"/>
        <end position="154"/>
    </location>
</feature>
<feature type="active site" description="Acyl-thioester intermediate" evidence="1">
    <location>
        <position position="116"/>
    </location>
</feature>
<feature type="binding site" evidence="1">
    <location>
        <begin position="5"/>
        <end position="12"/>
    </location>
    <ligand>
        <name>substrate</name>
    </ligand>
</feature>
<feature type="binding site" evidence="1">
    <location>
        <begin position="85"/>
        <end position="87"/>
    </location>
    <ligand>
        <name>substrate</name>
    </ligand>
</feature>
<feature type="binding site" evidence="1">
    <location>
        <begin position="98"/>
        <end position="100"/>
    </location>
    <ligand>
        <name>substrate</name>
    </ligand>
</feature>
<feature type="site" description="Lowers pKa of active site Cys" evidence="1">
    <location>
        <position position="82"/>
    </location>
</feature>
<feature type="non-terminal residue">
    <location>
        <position position="1"/>
    </location>
</feature>
<gene>
    <name type="primary">lipB</name>
</gene>
<organism>
    <name type="scientific">Paracoccus versutus</name>
    <name type="common">Thiobacillus versutus</name>
    <dbReference type="NCBI Taxonomy" id="34007"/>
    <lineage>
        <taxon>Bacteria</taxon>
        <taxon>Pseudomonadati</taxon>
        <taxon>Pseudomonadota</taxon>
        <taxon>Alphaproteobacteria</taxon>
        <taxon>Rhodobacterales</taxon>
        <taxon>Paracoccaceae</taxon>
        <taxon>Paracoccus</taxon>
    </lineage>
</organism>
<protein>
    <recommendedName>
        <fullName>Octanoyltransferase</fullName>
        <ecNumber>2.3.1.181</ecNumber>
    </recommendedName>
    <alternativeName>
        <fullName>Lipoate-protein ligase B</fullName>
    </alternativeName>
    <alternativeName>
        <fullName>Lipoyl/octanoyl transferase</fullName>
    </alternativeName>
    <alternativeName>
        <fullName>Octanoyl-[acyl-carrier-protein]-protein N-octanoyltransferase</fullName>
    </alternativeName>
</protein>
<evidence type="ECO:0000250" key="1"/>
<evidence type="ECO:0000255" key="2">
    <source>
        <dbReference type="PROSITE-ProRule" id="PRU01067"/>
    </source>
</evidence>
<evidence type="ECO:0000305" key="3"/>
<reference key="1">
    <citation type="journal article" date="1992" name="J. Bacteriol.">
        <title>Cytochrome c550 from Thiobacillus versutus: cloning, expression in Escherichia coli, and purification of the heterologous holoprotein.</title>
        <authorList>
            <person name="Ubbink M."/>
            <person name="van Beeumen J."/>
            <person name="Canters G.W."/>
        </authorList>
    </citation>
    <scope>NUCLEOTIDE SEQUENCE [GENOMIC DNA]</scope>
    <source>
        <strain>ATCC 25364 / DSM 582 / JCM 20754 / NBRC 14567 / VKM B-2163</strain>
    </source>
</reference>
<name>LIPB_PARVE</name>
<proteinExistence type="inferred from homology"/>
<comment type="function">
    <text evidence="1">Catalyzes the transfer of endogenously produced octanoic acid from octanoyl-acyl-carrier-protein onto the lipoyl domains of lipoate-dependent enzymes. Lipoyl-ACP can also act as a substrate although octanoyl-ACP is likely to be the physiological substrate (By similarity).</text>
</comment>
<comment type="catalytic activity">
    <reaction>
        <text>octanoyl-[ACP] + L-lysyl-[protein] = N(6)-octanoyl-L-lysyl-[protein] + holo-[ACP] + H(+)</text>
        <dbReference type="Rhea" id="RHEA:17665"/>
        <dbReference type="Rhea" id="RHEA-COMP:9636"/>
        <dbReference type="Rhea" id="RHEA-COMP:9685"/>
        <dbReference type="Rhea" id="RHEA-COMP:9752"/>
        <dbReference type="Rhea" id="RHEA-COMP:9928"/>
        <dbReference type="ChEBI" id="CHEBI:15378"/>
        <dbReference type="ChEBI" id="CHEBI:29969"/>
        <dbReference type="ChEBI" id="CHEBI:64479"/>
        <dbReference type="ChEBI" id="CHEBI:78463"/>
        <dbReference type="ChEBI" id="CHEBI:78809"/>
        <dbReference type="EC" id="2.3.1.181"/>
    </reaction>
</comment>
<comment type="pathway">
    <text>Protein modification; protein lipoylation via endogenous pathway; protein N(6)-(lipoyl)lysine from octanoyl-[acyl-carrier-protein]: step 1/2.</text>
</comment>
<comment type="subcellular location">
    <subcellularLocation>
        <location evidence="1">Cytoplasm</location>
    </subcellularLocation>
</comment>
<comment type="miscellaneous">
    <text evidence="1">In the reaction, the free carboxyl group of octanoic acid is attached via an amide linkage to the epsilon-amino group of a specific lysine residue of lipoyl domains of lipoate-dependent enzymes.</text>
</comment>
<comment type="similarity">
    <text evidence="3">Belongs to the LipB family.</text>
</comment>
<keyword id="KW-0012">Acyltransferase</keyword>
<keyword id="KW-0963">Cytoplasm</keyword>
<keyword id="KW-0808">Transferase</keyword>
<sequence>HAVGRGGQYTYHGPGQRLVYVMLDLNRRGRDVRAFVKALESWVIDALAEFNLKGEIRDGRVGVWIARPDKASLPDGSMREDKIAAIGVKLRRWVSFHGISINVEPDLGHYAGIVPCGIQGHGVTSLVDMGLPVGMGDLDLALRRSFARNFPPLGG</sequence>